<organism>
    <name type="scientific">Danio rerio</name>
    <name type="common">Zebrafish</name>
    <name type="synonym">Brachydanio rerio</name>
    <dbReference type="NCBI Taxonomy" id="7955"/>
    <lineage>
        <taxon>Eukaryota</taxon>
        <taxon>Metazoa</taxon>
        <taxon>Chordata</taxon>
        <taxon>Craniata</taxon>
        <taxon>Vertebrata</taxon>
        <taxon>Euteleostomi</taxon>
        <taxon>Actinopterygii</taxon>
        <taxon>Neopterygii</taxon>
        <taxon>Teleostei</taxon>
        <taxon>Ostariophysi</taxon>
        <taxon>Cypriniformes</taxon>
        <taxon>Danionidae</taxon>
        <taxon>Danioninae</taxon>
        <taxon>Danio</taxon>
    </lineage>
</organism>
<proteinExistence type="evidence at transcript level"/>
<accession>Q6P0E7</accession>
<accession>Q6PBA7</accession>
<sequence>MLVHSYSSMERADGLSSSSPGGRLSQLNQAAYSSAPPLCHTPASDFQPPYFPPPYPQSSLSYSQSQDGGYPHLPEPYPSLNSLHQHQQAAWHSQRSRSEDAGLLSQPHRALSLDPRREYPGVPRLLTHGLGDGAAALGDGPLGMHAVHHGLDDIQGLEEASALGILDHSVIKKVPLPSKLNGSTISALSLSKEGLGLGGVSNPAEVFCSVPGRLSLLSSTSKYKVTVGEVQRRLAPPECLNASLLGGVLRRAKSKNGGRCLRERLEKIGLNLPAGRRKAANVTLLTALVEGEAVHLARDFGYVCETEFPARATAEYLCRQTEPDQLPTRRSMLLATKEICKEFVDLMSQDRSPLGASRPTPCLEPGVQSSLTHFSLLTHGFGTPALCAALSAFQSYLLEALKLLDKGENGGKNHHDKELKHRK</sequence>
<name>AP2E_DANRE</name>
<gene>
    <name evidence="7" type="primary">tfap2e</name>
    <name type="ORF">zgc:65882</name>
</gene>
<reference evidence="5 6" key="1">
    <citation type="submission" date="2004-01" db="EMBL/GenBank/DDBJ databases">
        <authorList>
            <consortium name="NIH - Zebrafish Gene Collection (ZGC) project"/>
        </authorList>
    </citation>
    <scope>NUCLEOTIDE SEQUENCE [LARGE SCALE MRNA] (ISOFORMS 1 AND 2)</scope>
    <source>
        <tissue evidence="6">Embryo</tissue>
    </source>
</reference>
<protein>
    <recommendedName>
        <fullName>Transcription factor AP-2-epsilon</fullName>
        <shortName>AP-2-epsilon</shortName>
    </recommendedName>
</protein>
<evidence type="ECO:0000250" key="1">
    <source>
        <dbReference type="UniProtKB" id="Q6VUP9"/>
    </source>
</evidence>
<evidence type="ECO:0000255" key="2"/>
<evidence type="ECO:0000256" key="3">
    <source>
        <dbReference type="SAM" id="MobiDB-lite"/>
    </source>
</evidence>
<evidence type="ECO:0000303" key="4">
    <source ref="1"/>
</evidence>
<evidence type="ECO:0000305" key="5"/>
<evidence type="ECO:0000312" key="6">
    <source>
        <dbReference type="EMBL" id="AAH65649.1"/>
    </source>
</evidence>
<evidence type="ECO:0000312" key="7">
    <source>
        <dbReference type="ZFIN" id="ZDB-GENE-040426-1455"/>
    </source>
</evidence>
<feature type="chain" id="PRO_0000309518" description="Transcription factor AP-2-epsilon">
    <location>
        <begin position="1"/>
        <end position="423"/>
    </location>
</feature>
<feature type="region of interest" description="Disordered" evidence="3">
    <location>
        <begin position="1"/>
        <end position="108"/>
    </location>
</feature>
<feature type="region of interest" description="H-S-H (helix-span-helix), dimerization" evidence="2">
    <location>
        <begin position="276"/>
        <end position="405"/>
    </location>
</feature>
<feature type="short sequence motif" description="PPxY motif" evidence="2">
    <location>
        <begin position="50"/>
        <end position="55"/>
    </location>
</feature>
<feature type="compositionally biased region" description="Low complexity" evidence="3">
    <location>
        <begin position="14"/>
        <end position="27"/>
    </location>
</feature>
<feature type="compositionally biased region" description="Low complexity" evidence="3">
    <location>
        <begin position="57"/>
        <end position="70"/>
    </location>
</feature>
<feature type="compositionally biased region" description="Polar residues" evidence="3">
    <location>
        <begin position="79"/>
        <end position="93"/>
    </location>
</feature>
<feature type="splice variant" id="VSP_052605" description="In isoform 2." evidence="4">
    <original>L</original>
    <variation>LSQL</variation>
    <location>
        <position position="24"/>
    </location>
</feature>
<keyword id="KW-0010">Activator</keyword>
<keyword id="KW-0025">Alternative splicing</keyword>
<keyword id="KW-0238">DNA-binding</keyword>
<keyword id="KW-0539">Nucleus</keyword>
<keyword id="KW-1185">Reference proteome</keyword>
<keyword id="KW-0804">Transcription</keyword>
<keyword id="KW-0805">Transcription regulation</keyword>
<comment type="function">
    <text evidence="5">Sequence-specific DNA-binding protein that interacts with inducible viral and cellular enhancer elements to regulate transcription of selected genes. AP-2 factors bind to the consensus sequence 5'-GCCNNNGGC-3' and activate genes involved in a large spectrum of important biological functions.</text>
</comment>
<comment type="subunit">
    <text evidence="1">Binds DNA as a dimer. Can form homodimers or heterodimers with other AP-2 family members (By similarity).</text>
</comment>
<comment type="subcellular location">
    <subcellularLocation>
        <location evidence="1">Nucleus</location>
    </subcellularLocation>
</comment>
<comment type="alternative products">
    <event type="alternative splicing"/>
    <isoform>
        <id>Q6P0E7-1</id>
        <name>1</name>
        <sequence type="displayed"/>
    </isoform>
    <isoform>
        <id>Q6P0E7-2</id>
        <name>2</name>
        <sequence type="described" ref="VSP_052605"/>
    </isoform>
</comment>
<comment type="similarity">
    <text evidence="2">Belongs to the AP-2 family.</text>
</comment>
<comment type="sequence caution" evidence="5">
    <conflict type="erroneous initiation">
        <sequence resource="EMBL-CDS" id="AAH59800"/>
    </conflict>
</comment>
<dbReference type="EMBL" id="BC059800">
    <property type="protein sequence ID" value="AAH59800.1"/>
    <property type="status" value="ALT_INIT"/>
    <property type="molecule type" value="mRNA"/>
</dbReference>
<dbReference type="EMBL" id="BC065649">
    <property type="protein sequence ID" value="AAH65649.1"/>
    <property type="molecule type" value="mRNA"/>
</dbReference>
<dbReference type="RefSeq" id="NP_957115.2">
    <molecule id="Q6P0E7-2"/>
    <property type="nucleotide sequence ID" value="NM_200821.2"/>
</dbReference>
<dbReference type="SMR" id="Q6P0E7"/>
<dbReference type="FunCoup" id="Q6P0E7">
    <property type="interactions" value="457"/>
</dbReference>
<dbReference type="STRING" id="7955.ENSDARP00000140065"/>
<dbReference type="PaxDb" id="7955-ENSDARP00000007990"/>
<dbReference type="GeneID" id="393794"/>
<dbReference type="KEGG" id="dre:393794"/>
<dbReference type="AGR" id="ZFIN:ZDB-GENE-040426-1455"/>
<dbReference type="CTD" id="339488"/>
<dbReference type="ZFIN" id="ZDB-GENE-040426-1455">
    <property type="gene designation" value="tfap2e"/>
</dbReference>
<dbReference type="eggNOG" id="KOG3811">
    <property type="taxonomic scope" value="Eukaryota"/>
</dbReference>
<dbReference type="InParanoid" id="Q6P0E7"/>
<dbReference type="OrthoDB" id="6252992at2759"/>
<dbReference type="PhylomeDB" id="Q6P0E7"/>
<dbReference type="Reactome" id="R-DRE-8866907">
    <property type="pathway name" value="Activation of the TFAP2 (AP-2) family of transcription factors"/>
</dbReference>
<dbReference type="PRO" id="PR:Q6P0E7"/>
<dbReference type="Proteomes" id="UP000000437">
    <property type="component" value="Chromosome 19"/>
</dbReference>
<dbReference type="Bgee" id="ENSDARG00000008861">
    <property type="expression patterns" value="Expressed in larva and 22 other cell types or tissues"/>
</dbReference>
<dbReference type="ExpressionAtlas" id="Q6P0E7">
    <property type="expression patterns" value="baseline and differential"/>
</dbReference>
<dbReference type="GO" id="GO:0005634">
    <property type="term" value="C:nucleus"/>
    <property type="evidence" value="ECO:0000318"/>
    <property type="project" value="GO_Central"/>
</dbReference>
<dbReference type="GO" id="GO:0001228">
    <property type="term" value="F:DNA-binding transcription activator activity, RNA polymerase II-specific"/>
    <property type="evidence" value="ECO:0000318"/>
    <property type="project" value="GO_Central"/>
</dbReference>
<dbReference type="GO" id="GO:0000977">
    <property type="term" value="F:RNA polymerase II transcription regulatory region sequence-specific DNA binding"/>
    <property type="evidence" value="ECO:0000318"/>
    <property type="project" value="GO_Central"/>
</dbReference>
<dbReference type="GO" id="GO:0048066">
    <property type="term" value="P:developmental pigmentation"/>
    <property type="evidence" value="ECO:0000316"/>
    <property type="project" value="ZFIN"/>
</dbReference>
<dbReference type="GO" id="GO:0030318">
    <property type="term" value="P:melanocyte differentiation"/>
    <property type="evidence" value="ECO:0000316"/>
    <property type="project" value="ZFIN"/>
</dbReference>
<dbReference type="GO" id="GO:0045944">
    <property type="term" value="P:positive regulation of transcription by RNA polymerase II"/>
    <property type="evidence" value="ECO:0000318"/>
    <property type="project" value="GO_Central"/>
</dbReference>
<dbReference type="GO" id="GO:0042127">
    <property type="term" value="P:regulation of cell population proliferation"/>
    <property type="evidence" value="ECO:0000318"/>
    <property type="project" value="GO_Central"/>
</dbReference>
<dbReference type="InterPro" id="IPR004979">
    <property type="entry name" value="TF_AP2"/>
</dbReference>
<dbReference type="InterPro" id="IPR013854">
    <property type="entry name" value="TF_AP2_C"/>
</dbReference>
<dbReference type="PANTHER" id="PTHR10812">
    <property type="entry name" value="TRANSCRIPTION FACTOR AP-2"/>
    <property type="match status" value="1"/>
</dbReference>
<dbReference type="PANTHER" id="PTHR10812:SF13">
    <property type="entry name" value="TRANSCRIPTION FACTOR AP-2-EPSILON"/>
    <property type="match status" value="1"/>
</dbReference>
<dbReference type="Pfam" id="PF03299">
    <property type="entry name" value="TF_AP-2"/>
    <property type="match status" value="1"/>
</dbReference>
<dbReference type="PRINTS" id="PR01748">
    <property type="entry name" value="AP2TNSCPFCT"/>
</dbReference>